<comment type="function">
    <text evidence="1">Binds directly to 16S ribosomal RNA.</text>
</comment>
<comment type="similarity">
    <text evidence="1">Belongs to the bacterial ribosomal protein bS20 family.</text>
</comment>
<name>RS20_GLOVI</name>
<gene>
    <name evidence="1" type="primary">rpsT</name>
    <name evidence="1" type="synonym">rps20</name>
    <name type="ordered locus">gll0160</name>
</gene>
<organism>
    <name type="scientific">Gloeobacter violaceus (strain ATCC 29082 / PCC 7421)</name>
    <dbReference type="NCBI Taxonomy" id="251221"/>
    <lineage>
        <taxon>Bacteria</taxon>
        <taxon>Bacillati</taxon>
        <taxon>Cyanobacteriota</taxon>
        <taxon>Cyanophyceae</taxon>
        <taxon>Gloeobacterales</taxon>
        <taxon>Gloeobacteraceae</taxon>
        <taxon>Gloeobacter</taxon>
    </lineage>
</organism>
<sequence length="102" mass="11304">MPNIKSAIKRVDVAERNRQRNIAYKSMIKTFTKKFMTRLGEYAQSPSEAVLTEVQALLNQTFSRIDKAIKAGVIHTNTGARKKSRLDAALRTALAKAQAKAG</sequence>
<reference key="1">
    <citation type="journal article" date="2003" name="DNA Res.">
        <title>Complete genome structure of Gloeobacter violaceus PCC 7421, a cyanobacterium that lacks thylakoids.</title>
        <authorList>
            <person name="Nakamura Y."/>
            <person name="Kaneko T."/>
            <person name="Sato S."/>
            <person name="Mimuro M."/>
            <person name="Miyashita H."/>
            <person name="Tsuchiya T."/>
            <person name="Sasamoto S."/>
            <person name="Watanabe A."/>
            <person name="Kawashima K."/>
            <person name="Kishida Y."/>
            <person name="Kiyokawa C."/>
            <person name="Kohara M."/>
            <person name="Matsumoto M."/>
            <person name="Matsuno A."/>
            <person name="Nakazaki N."/>
            <person name="Shimpo S."/>
            <person name="Takeuchi C."/>
            <person name="Yamada M."/>
            <person name="Tabata S."/>
        </authorList>
    </citation>
    <scope>NUCLEOTIDE SEQUENCE [LARGE SCALE GENOMIC DNA]</scope>
    <source>
        <strain>ATCC 29082 / PCC 7421</strain>
    </source>
</reference>
<feature type="chain" id="PRO_0000167966" description="Small ribosomal subunit protein bS20">
    <location>
        <begin position="1"/>
        <end position="102"/>
    </location>
</feature>
<keyword id="KW-1185">Reference proteome</keyword>
<keyword id="KW-0687">Ribonucleoprotein</keyword>
<keyword id="KW-0689">Ribosomal protein</keyword>
<keyword id="KW-0694">RNA-binding</keyword>
<keyword id="KW-0699">rRNA-binding</keyword>
<dbReference type="EMBL" id="BA000045">
    <property type="protein sequence ID" value="BAC88101.1"/>
    <property type="molecule type" value="Genomic_DNA"/>
</dbReference>
<dbReference type="RefSeq" id="NP_923106.1">
    <property type="nucleotide sequence ID" value="NC_005125.1"/>
</dbReference>
<dbReference type="RefSeq" id="WP_011140164.1">
    <property type="nucleotide sequence ID" value="NC_005125.1"/>
</dbReference>
<dbReference type="SMR" id="Q7NP97"/>
<dbReference type="FunCoup" id="Q7NP97">
    <property type="interactions" value="72"/>
</dbReference>
<dbReference type="STRING" id="251221.gene:10757629"/>
<dbReference type="EnsemblBacteria" id="BAC88101">
    <property type="protein sequence ID" value="BAC88101"/>
    <property type="gene ID" value="BAC88101"/>
</dbReference>
<dbReference type="KEGG" id="gvi:gll0160"/>
<dbReference type="PATRIC" id="fig|251221.4.peg.160"/>
<dbReference type="eggNOG" id="COG0268">
    <property type="taxonomic scope" value="Bacteria"/>
</dbReference>
<dbReference type="HOGENOM" id="CLU_160655_5_0_3"/>
<dbReference type="InParanoid" id="Q7NP97"/>
<dbReference type="OrthoDB" id="9808392at2"/>
<dbReference type="PhylomeDB" id="Q7NP97"/>
<dbReference type="Proteomes" id="UP000000557">
    <property type="component" value="Chromosome"/>
</dbReference>
<dbReference type="GO" id="GO:0005829">
    <property type="term" value="C:cytosol"/>
    <property type="evidence" value="ECO:0000318"/>
    <property type="project" value="GO_Central"/>
</dbReference>
<dbReference type="GO" id="GO:0015935">
    <property type="term" value="C:small ribosomal subunit"/>
    <property type="evidence" value="ECO:0000318"/>
    <property type="project" value="GO_Central"/>
</dbReference>
<dbReference type="GO" id="GO:0070181">
    <property type="term" value="F:small ribosomal subunit rRNA binding"/>
    <property type="evidence" value="ECO:0000318"/>
    <property type="project" value="GO_Central"/>
</dbReference>
<dbReference type="GO" id="GO:0003735">
    <property type="term" value="F:structural constituent of ribosome"/>
    <property type="evidence" value="ECO:0007669"/>
    <property type="project" value="InterPro"/>
</dbReference>
<dbReference type="GO" id="GO:0006412">
    <property type="term" value="P:translation"/>
    <property type="evidence" value="ECO:0007669"/>
    <property type="project" value="UniProtKB-UniRule"/>
</dbReference>
<dbReference type="FunFam" id="1.20.58.110:FF:000001">
    <property type="entry name" value="30S ribosomal protein S20"/>
    <property type="match status" value="1"/>
</dbReference>
<dbReference type="Gene3D" id="1.20.58.110">
    <property type="entry name" value="Ribosomal protein S20"/>
    <property type="match status" value="1"/>
</dbReference>
<dbReference type="HAMAP" id="MF_00500">
    <property type="entry name" value="Ribosomal_bS20"/>
    <property type="match status" value="1"/>
</dbReference>
<dbReference type="InterPro" id="IPR002583">
    <property type="entry name" value="Ribosomal_bS20"/>
</dbReference>
<dbReference type="InterPro" id="IPR036510">
    <property type="entry name" value="Ribosomal_bS20_sf"/>
</dbReference>
<dbReference type="NCBIfam" id="TIGR00029">
    <property type="entry name" value="S20"/>
    <property type="match status" value="1"/>
</dbReference>
<dbReference type="PANTHER" id="PTHR33398">
    <property type="entry name" value="30S RIBOSOMAL PROTEIN S20"/>
    <property type="match status" value="1"/>
</dbReference>
<dbReference type="PANTHER" id="PTHR33398:SF1">
    <property type="entry name" value="SMALL RIBOSOMAL SUBUNIT PROTEIN BS20C"/>
    <property type="match status" value="1"/>
</dbReference>
<dbReference type="Pfam" id="PF01649">
    <property type="entry name" value="Ribosomal_S20p"/>
    <property type="match status" value="1"/>
</dbReference>
<dbReference type="SUPFAM" id="SSF46992">
    <property type="entry name" value="Ribosomal protein S20"/>
    <property type="match status" value="1"/>
</dbReference>
<protein>
    <recommendedName>
        <fullName evidence="1">Small ribosomal subunit protein bS20</fullName>
    </recommendedName>
    <alternativeName>
        <fullName evidence="2">30S ribosomal protein S20</fullName>
    </alternativeName>
</protein>
<evidence type="ECO:0000255" key="1">
    <source>
        <dbReference type="HAMAP-Rule" id="MF_00500"/>
    </source>
</evidence>
<evidence type="ECO:0000305" key="2"/>
<accession>Q7NP97</accession>
<proteinExistence type="inferred from homology"/>